<evidence type="ECO:0000255" key="1">
    <source>
        <dbReference type="HAMAP-Rule" id="MF_00038"/>
    </source>
</evidence>
<protein>
    <recommendedName>
        <fullName evidence="1">Phospho-N-acetylmuramoyl-pentapeptide-transferase</fullName>
        <ecNumber evidence="1">2.7.8.13</ecNumber>
    </recommendedName>
    <alternativeName>
        <fullName evidence="1">UDP-MurNAc-pentapeptide phosphotransferase</fullName>
    </alternativeName>
</protein>
<name>MRAY_BARQU</name>
<comment type="function">
    <text evidence="1">Catalyzes the initial step of the lipid cycle reactions in the biosynthesis of the cell wall peptidoglycan: transfers peptidoglycan precursor phospho-MurNAc-pentapeptide from UDP-MurNAc-pentapeptide onto the lipid carrier undecaprenyl phosphate, yielding undecaprenyl-pyrophosphoryl-MurNAc-pentapeptide, known as lipid I.</text>
</comment>
<comment type="catalytic activity">
    <reaction evidence="1">
        <text>UDP-N-acetyl-alpha-D-muramoyl-L-alanyl-gamma-D-glutamyl-meso-2,6-diaminopimeloyl-D-alanyl-D-alanine + di-trans,octa-cis-undecaprenyl phosphate = di-trans,octa-cis-undecaprenyl diphospho-N-acetyl-alpha-D-muramoyl-L-alanyl-D-glutamyl-meso-2,6-diaminopimeloyl-D-alanyl-D-alanine + UMP</text>
        <dbReference type="Rhea" id="RHEA:28386"/>
        <dbReference type="ChEBI" id="CHEBI:57865"/>
        <dbReference type="ChEBI" id="CHEBI:60392"/>
        <dbReference type="ChEBI" id="CHEBI:61386"/>
        <dbReference type="ChEBI" id="CHEBI:61387"/>
        <dbReference type="EC" id="2.7.8.13"/>
    </reaction>
</comment>
<comment type="cofactor">
    <cofactor evidence="1">
        <name>Mg(2+)</name>
        <dbReference type="ChEBI" id="CHEBI:18420"/>
    </cofactor>
</comment>
<comment type="pathway">
    <text evidence="1">Cell wall biogenesis; peptidoglycan biosynthesis.</text>
</comment>
<comment type="subcellular location">
    <subcellularLocation>
        <location evidence="1">Cell inner membrane</location>
        <topology evidence="1">Multi-pass membrane protein</topology>
    </subcellularLocation>
</comment>
<comment type="similarity">
    <text evidence="1">Belongs to the glycosyltransferase 4 family. MraY subfamily.</text>
</comment>
<accession>Q6G121</accession>
<organism>
    <name type="scientific">Bartonella quintana (strain Toulouse)</name>
    <name type="common">Rochalimaea quintana</name>
    <dbReference type="NCBI Taxonomy" id="283165"/>
    <lineage>
        <taxon>Bacteria</taxon>
        <taxon>Pseudomonadati</taxon>
        <taxon>Pseudomonadota</taxon>
        <taxon>Alphaproteobacteria</taxon>
        <taxon>Hyphomicrobiales</taxon>
        <taxon>Bartonellaceae</taxon>
        <taxon>Bartonella</taxon>
    </lineage>
</organism>
<keyword id="KW-0131">Cell cycle</keyword>
<keyword id="KW-0132">Cell division</keyword>
<keyword id="KW-0997">Cell inner membrane</keyword>
<keyword id="KW-1003">Cell membrane</keyword>
<keyword id="KW-0133">Cell shape</keyword>
<keyword id="KW-0961">Cell wall biogenesis/degradation</keyword>
<keyword id="KW-0460">Magnesium</keyword>
<keyword id="KW-0472">Membrane</keyword>
<keyword id="KW-0479">Metal-binding</keyword>
<keyword id="KW-0573">Peptidoglycan synthesis</keyword>
<keyword id="KW-0808">Transferase</keyword>
<keyword id="KW-0812">Transmembrane</keyword>
<keyword id="KW-1133">Transmembrane helix</keyword>
<dbReference type="EC" id="2.7.8.13" evidence="1"/>
<dbReference type="EMBL" id="BX897700">
    <property type="protein sequence ID" value="CAF26368.1"/>
    <property type="molecule type" value="Genomic_DNA"/>
</dbReference>
<dbReference type="RefSeq" id="WP_011179606.1">
    <property type="nucleotide sequence ID" value="NC_005955.1"/>
</dbReference>
<dbReference type="SMR" id="Q6G121"/>
<dbReference type="GeneID" id="56532758"/>
<dbReference type="KEGG" id="bqu:BQ08890"/>
<dbReference type="eggNOG" id="COG0472">
    <property type="taxonomic scope" value="Bacteria"/>
</dbReference>
<dbReference type="HOGENOM" id="CLU_023982_0_0_5"/>
<dbReference type="OrthoDB" id="9805475at2"/>
<dbReference type="UniPathway" id="UPA00219"/>
<dbReference type="Proteomes" id="UP000000597">
    <property type="component" value="Chromosome"/>
</dbReference>
<dbReference type="GO" id="GO:0005886">
    <property type="term" value="C:plasma membrane"/>
    <property type="evidence" value="ECO:0007669"/>
    <property type="project" value="UniProtKB-SubCell"/>
</dbReference>
<dbReference type="GO" id="GO:0046872">
    <property type="term" value="F:metal ion binding"/>
    <property type="evidence" value="ECO:0007669"/>
    <property type="project" value="UniProtKB-KW"/>
</dbReference>
<dbReference type="GO" id="GO:0008963">
    <property type="term" value="F:phospho-N-acetylmuramoyl-pentapeptide-transferase activity"/>
    <property type="evidence" value="ECO:0007669"/>
    <property type="project" value="UniProtKB-UniRule"/>
</dbReference>
<dbReference type="GO" id="GO:0051992">
    <property type="term" value="F:UDP-N-acetylmuramoyl-L-alanyl-D-glutamyl-meso-2,6-diaminopimelyl-D-alanyl-D-alanine:undecaprenyl-phosphate transferase activity"/>
    <property type="evidence" value="ECO:0007669"/>
    <property type="project" value="RHEA"/>
</dbReference>
<dbReference type="GO" id="GO:0051301">
    <property type="term" value="P:cell division"/>
    <property type="evidence" value="ECO:0007669"/>
    <property type="project" value="UniProtKB-KW"/>
</dbReference>
<dbReference type="GO" id="GO:0071555">
    <property type="term" value="P:cell wall organization"/>
    <property type="evidence" value="ECO:0007669"/>
    <property type="project" value="UniProtKB-KW"/>
</dbReference>
<dbReference type="GO" id="GO:0009252">
    <property type="term" value="P:peptidoglycan biosynthetic process"/>
    <property type="evidence" value="ECO:0007669"/>
    <property type="project" value="UniProtKB-UniRule"/>
</dbReference>
<dbReference type="GO" id="GO:0008360">
    <property type="term" value="P:regulation of cell shape"/>
    <property type="evidence" value="ECO:0007669"/>
    <property type="project" value="UniProtKB-KW"/>
</dbReference>
<dbReference type="CDD" id="cd06852">
    <property type="entry name" value="GT_MraY"/>
    <property type="match status" value="1"/>
</dbReference>
<dbReference type="HAMAP" id="MF_00038">
    <property type="entry name" value="MraY"/>
    <property type="match status" value="1"/>
</dbReference>
<dbReference type="InterPro" id="IPR000715">
    <property type="entry name" value="Glycosyl_transferase_4"/>
</dbReference>
<dbReference type="InterPro" id="IPR003524">
    <property type="entry name" value="PNAcMuramoyl-5peptid_Trfase"/>
</dbReference>
<dbReference type="InterPro" id="IPR018480">
    <property type="entry name" value="PNAcMuramoyl-5peptid_Trfase_CS"/>
</dbReference>
<dbReference type="NCBIfam" id="TIGR00445">
    <property type="entry name" value="mraY"/>
    <property type="match status" value="1"/>
</dbReference>
<dbReference type="PANTHER" id="PTHR22926">
    <property type="entry name" value="PHOSPHO-N-ACETYLMURAMOYL-PENTAPEPTIDE-TRANSFERASE"/>
    <property type="match status" value="1"/>
</dbReference>
<dbReference type="PANTHER" id="PTHR22926:SF5">
    <property type="entry name" value="PHOSPHO-N-ACETYLMURAMOYL-PENTAPEPTIDE-TRANSFERASE HOMOLOG"/>
    <property type="match status" value="1"/>
</dbReference>
<dbReference type="Pfam" id="PF00953">
    <property type="entry name" value="Glycos_transf_4"/>
    <property type="match status" value="1"/>
</dbReference>
<dbReference type="Pfam" id="PF10555">
    <property type="entry name" value="MraY_sig1"/>
    <property type="match status" value="1"/>
</dbReference>
<dbReference type="PROSITE" id="PS01347">
    <property type="entry name" value="MRAY_1"/>
    <property type="match status" value="1"/>
</dbReference>
<dbReference type="PROSITE" id="PS01348">
    <property type="entry name" value="MRAY_2"/>
    <property type="match status" value="1"/>
</dbReference>
<proteinExistence type="inferred from homology"/>
<gene>
    <name evidence="1" type="primary">mraY</name>
    <name type="ordered locus">BQ08890</name>
</gene>
<feature type="chain" id="PRO_0000108786" description="Phospho-N-acetylmuramoyl-pentapeptide-transferase">
    <location>
        <begin position="1"/>
        <end position="356"/>
    </location>
</feature>
<feature type="transmembrane region" description="Helical" evidence="1">
    <location>
        <begin position="25"/>
        <end position="45"/>
    </location>
</feature>
<feature type="transmembrane region" description="Helical" evidence="1">
    <location>
        <begin position="70"/>
        <end position="90"/>
    </location>
</feature>
<feature type="transmembrane region" description="Helical" evidence="1">
    <location>
        <begin position="93"/>
        <end position="113"/>
    </location>
</feature>
<feature type="transmembrane region" description="Helical" evidence="1">
    <location>
        <begin position="138"/>
        <end position="158"/>
    </location>
</feature>
<feature type="transmembrane region" description="Helical" evidence="1">
    <location>
        <begin position="164"/>
        <end position="184"/>
    </location>
</feature>
<feature type="transmembrane region" description="Helical" evidence="1">
    <location>
        <begin position="195"/>
        <end position="215"/>
    </location>
</feature>
<feature type="transmembrane region" description="Helical" evidence="1">
    <location>
        <begin position="235"/>
        <end position="255"/>
    </location>
</feature>
<feature type="transmembrane region" description="Helical" evidence="1">
    <location>
        <begin position="258"/>
        <end position="278"/>
    </location>
</feature>
<feature type="transmembrane region" description="Helical" evidence="1">
    <location>
        <begin position="284"/>
        <end position="304"/>
    </location>
</feature>
<feature type="transmembrane region" description="Helical" evidence="1">
    <location>
        <begin position="333"/>
        <end position="353"/>
    </location>
</feature>
<reference key="1">
    <citation type="journal article" date="2004" name="Proc. Natl. Acad. Sci. U.S.A.">
        <title>The louse-borne human pathogen Bartonella quintana is a genomic derivative of the zoonotic agent Bartonella henselae.</title>
        <authorList>
            <person name="Alsmark U.C.M."/>
            <person name="Frank A.C."/>
            <person name="Karlberg E.O."/>
            <person name="Legault B.-A."/>
            <person name="Ardell D.H."/>
            <person name="Canbaeck B."/>
            <person name="Eriksson A.-S."/>
            <person name="Naeslund A.K."/>
            <person name="Handley S.A."/>
            <person name="Huvet M."/>
            <person name="La Scola B."/>
            <person name="Holmberg M."/>
            <person name="Andersson S.G.E."/>
        </authorList>
    </citation>
    <scope>NUCLEOTIDE SEQUENCE [LARGE SCALE GENOMIC DNA]</scope>
    <source>
        <strain>Toulouse</strain>
    </source>
</reference>
<sequence length="356" mass="38622">MMLFFSSLSDWFPGVSVFRYITFRTVAAMLTSGLIVFLFGPSIIASLKLRQGKGQPIRADGPQTHFKKAGTPTMGGLMILTGIVVSAFLWCNLSNIYFWVSLFVMLSFGMIGFYDDYLKVTKQTEKGFSGKARLSLEFLIAIIAAFVLLQVGSSGLALPFVKDYFINLSWFFLPFSAFVIVGTGNAVNLTDGLDGLAIVPVMVAALSFALIAYLSGNINFADYLQIHYVSGTGELAVLLGAVVGAGLGFLWFNAPPAAIFMGDTGSLALGGLLGIVAVATKHEIVLALIGGLFVLEGFSVVIQVGYFKLKKKRVFLMAPIHHHFEKKGWTESQVVIRFWIISIVLALVGLSTLKLR</sequence>